<feature type="chain" id="PRO_1000118105" description="Transcription antitermination protein NusB">
    <location>
        <begin position="1"/>
        <end position="137"/>
    </location>
</feature>
<proteinExistence type="inferred from homology"/>
<evidence type="ECO:0000255" key="1">
    <source>
        <dbReference type="HAMAP-Rule" id="MF_00073"/>
    </source>
</evidence>
<sequence length="137" mass="15805">MKPSERRKARHCATQAIYQWQMTRANVGDIEEQFKIDQDTKGVDLNYFRDLLFGVALHCNELDKVFAPFLSRPLEEVDMVDKAILRLATYELTRRDDVPPRVVINEAIELAKAFAADDSHKFVNGVLDKVIKTLNKR</sequence>
<protein>
    <recommendedName>
        <fullName evidence="1">Transcription antitermination protein NusB</fullName>
    </recommendedName>
    <alternativeName>
        <fullName evidence="1">Antitermination factor NusB</fullName>
    </alternativeName>
</protein>
<reference key="1">
    <citation type="journal article" date="2008" name="BMC Genomics">
        <title>The genome of Aeromonas salmonicida subsp. salmonicida A449: insights into the evolution of a fish pathogen.</title>
        <authorList>
            <person name="Reith M.E."/>
            <person name="Singh R.K."/>
            <person name="Curtis B."/>
            <person name="Boyd J.M."/>
            <person name="Bouevitch A."/>
            <person name="Kimball J."/>
            <person name="Munholland J."/>
            <person name="Murphy C."/>
            <person name="Sarty D."/>
            <person name="Williams J."/>
            <person name="Nash J.H."/>
            <person name="Johnson S.C."/>
            <person name="Brown L.L."/>
        </authorList>
    </citation>
    <scope>NUCLEOTIDE SEQUENCE [LARGE SCALE GENOMIC DNA]</scope>
    <source>
        <strain>A449</strain>
    </source>
</reference>
<comment type="function">
    <text evidence="1">Involved in transcription antitermination. Required for transcription of ribosomal RNA (rRNA) genes. Binds specifically to the boxA antiterminator sequence of the ribosomal RNA (rrn) operons.</text>
</comment>
<comment type="similarity">
    <text evidence="1">Belongs to the NusB family.</text>
</comment>
<name>NUSB_AERS4</name>
<accession>A4SJP2</accession>
<dbReference type="EMBL" id="CP000644">
    <property type="protein sequence ID" value="ABO89114.1"/>
    <property type="molecule type" value="Genomic_DNA"/>
</dbReference>
<dbReference type="RefSeq" id="WP_005317593.1">
    <property type="nucleotide sequence ID" value="NC_009348.1"/>
</dbReference>
<dbReference type="SMR" id="A4SJP2"/>
<dbReference type="STRING" id="29491.GCA_000820065_01201"/>
<dbReference type="GeneID" id="79878646"/>
<dbReference type="KEGG" id="asa:ASA_0983"/>
<dbReference type="eggNOG" id="COG0781">
    <property type="taxonomic scope" value="Bacteria"/>
</dbReference>
<dbReference type="HOGENOM" id="CLU_087843_4_1_6"/>
<dbReference type="Proteomes" id="UP000000225">
    <property type="component" value="Chromosome"/>
</dbReference>
<dbReference type="GO" id="GO:0005829">
    <property type="term" value="C:cytosol"/>
    <property type="evidence" value="ECO:0007669"/>
    <property type="project" value="TreeGrafter"/>
</dbReference>
<dbReference type="GO" id="GO:0003723">
    <property type="term" value="F:RNA binding"/>
    <property type="evidence" value="ECO:0007669"/>
    <property type="project" value="UniProtKB-UniRule"/>
</dbReference>
<dbReference type="GO" id="GO:0006353">
    <property type="term" value="P:DNA-templated transcription termination"/>
    <property type="evidence" value="ECO:0007669"/>
    <property type="project" value="UniProtKB-UniRule"/>
</dbReference>
<dbReference type="GO" id="GO:0031564">
    <property type="term" value="P:transcription antitermination"/>
    <property type="evidence" value="ECO:0007669"/>
    <property type="project" value="UniProtKB-KW"/>
</dbReference>
<dbReference type="FunFam" id="1.10.940.10:FF:000001">
    <property type="entry name" value="Transcription antitermination factor NusB"/>
    <property type="match status" value="1"/>
</dbReference>
<dbReference type="Gene3D" id="1.10.940.10">
    <property type="entry name" value="NusB-like"/>
    <property type="match status" value="1"/>
</dbReference>
<dbReference type="HAMAP" id="MF_00073">
    <property type="entry name" value="NusB"/>
    <property type="match status" value="1"/>
</dbReference>
<dbReference type="InterPro" id="IPR035926">
    <property type="entry name" value="NusB-like_sf"/>
</dbReference>
<dbReference type="InterPro" id="IPR011605">
    <property type="entry name" value="NusB_fam"/>
</dbReference>
<dbReference type="InterPro" id="IPR006027">
    <property type="entry name" value="NusB_RsmB_TIM44"/>
</dbReference>
<dbReference type="NCBIfam" id="TIGR01951">
    <property type="entry name" value="nusB"/>
    <property type="match status" value="1"/>
</dbReference>
<dbReference type="PANTHER" id="PTHR11078:SF3">
    <property type="entry name" value="ANTITERMINATION NUSB DOMAIN-CONTAINING PROTEIN"/>
    <property type="match status" value="1"/>
</dbReference>
<dbReference type="PANTHER" id="PTHR11078">
    <property type="entry name" value="N UTILIZATION SUBSTANCE PROTEIN B-RELATED"/>
    <property type="match status" value="1"/>
</dbReference>
<dbReference type="Pfam" id="PF01029">
    <property type="entry name" value="NusB"/>
    <property type="match status" value="1"/>
</dbReference>
<dbReference type="SUPFAM" id="SSF48013">
    <property type="entry name" value="NusB-like"/>
    <property type="match status" value="1"/>
</dbReference>
<organism>
    <name type="scientific">Aeromonas salmonicida (strain A449)</name>
    <dbReference type="NCBI Taxonomy" id="382245"/>
    <lineage>
        <taxon>Bacteria</taxon>
        <taxon>Pseudomonadati</taxon>
        <taxon>Pseudomonadota</taxon>
        <taxon>Gammaproteobacteria</taxon>
        <taxon>Aeromonadales</taxon>
        <taxon>Aeromonadaceae</taxon>
        <taxon>Aeromonas</taxon>
    </lineage>
</organism>
<keyword id="KW-0694">RNA-binding</keyword>
<keyword id="KW-0804">Transcription</keyword>
<keyword id="KW-0889">Transcription antitermination</keyword>
<keyword id="KW-0805">Transcription regulation</keyword>
<gene>
    <name evidence="1" type="primary">nusB</name>
    <name type="ordered locus">ASA_0983</name>
</gene>